<gene>
    <name evidence="1" type="primary">galK</name>
    <name type="ordered locus">ECIAI39_0725</name>
</gene>
<accession>B7NNH9</accession>
<evidence type="ECO:0000255" key="1">
    <source>
        <dbReference type="HAMAP-Rule" id="MF_00246"/>
    </source>
</evidence>
<sequence length="382" mass="41456">MSLKEKTQSLFANAFGYPATHTIQAPGRVNLIGEHTDYNDGFVLPCAIDYQTVISCAPRDDRKVRVMAADYENQLDEFSLDAPIIAHENYQWANYVRGVVKHLQLRNNSFGGVDMVISGNVPQGAGLSSSASLEVAVGTVLQQLYHLPLDGAQIALNGQEAENQFVGCNCGIMDQLISALGKKDHALLIDCRSLGTKAVSMPKGVAVVIINSNFKRTLVGSEYNTRREQCETGARFFQQPALRDVTIEEFNAVAHELDPIVAKRVRHILTENARTVEAASALEQGDLKRMGELMAESHASMRDDFEITVPQIDTLVEIVKAVIGDKGGVRMTGGGFGGCIVALIPEELVPAVQQAVAEQYEAKTGIKETFYVCKPSQGAGQC</sequence>
<reference key="1">
    <citation type="journal article" date="2009" name="PLoS Genet.">
        <title>Organised genome dynamics in the Escherichia coli species results in highly diverse adaptive paths.</title>
        <authorList>
            <person name="Touchon M."/>
            <person name="Hoede C."/>
            <person name="Tenaillon O."/>
            <person name="Barbe V."/>
            <person name="Baeriswyl S."/>
            <person name="Bidet P."/>
            <person name="Bingen E."/>
            <person name="Bonacorsi S."/>
            <person name="Bouchier C."/>
            <person name="Bouvet O."/>
            <person name="Calteau A."/>
            <person name="Chiapello H."/>
            <person name="Clermont O."/>
            <person name="Cruveiller S."/>
            <person name="Danchin A."/>
            <person name="Diard M."/>
            <person name="Dossat C."/>
            <person name="Karoui M.E."/>
            <person name="Frapy E."/>
            <person name="Garry L."/>
            <person name="Ghigo J.M."/>
            <person name="Gilles A.M."/>
            <person name="Johnson J."/>
            <person name="Le Bouguenec C."/>
            <person name="Lescat M."/>
            <person name="Mangenot S."/>
            <person name="Martinez-Jehanne V."/>
            <person name="Matic I."/>
            <person name="Nassif X."/>
            <person name="Oztas S."/>
            <person name="Petit M.A."/>
            <person name="Pichon C."/>
            <person name="Rouy Z."/>
            <person name="Ruf C.S."/>
            <person name="Schneider D."/>
            <person name="Tourret J."/>
            <person name="Vacherie B."/>
            <person name="Vallenet D."/>
            <person name="Medigue C."/>
            <person name="Rocha E.P.C."/>
            <person name="Denamur E."/>
        </authorList>
    </citation>
    <scope>NUCLEOTIDE SEQUENCE [LARGE SCALE GENOMIC DNA]</scope>
    <source>
        <strain>IAI39 / ExPEC</strain>
    </source>
</reference>
<keyword id="KW-0067">ATP-binding</keyword>
<keyword id="KW-0119">Carbohydrate metabolism</keyword>
<keyword id="KW-0963">Cytoplasm</keyword>
<keyword id="KW-0299">Galactose metabolism</keyword>
<keyword id="KW-0418">Kinase</keyword>
<keyword id="KW-0460">Magnesium</keyword>
<keyword id="KW-0479">Metal-binding</keyword>
<keyword id="KW-0547">Nucleotide-binding</keyword>
<keyword id="KW-0808">Transferase</keyword>
<comment type="function">
    <text evidence="1">Catalyzes the transfer of the gamma-phosphate of ATP to D-galactose to form alpha-D-galactose-1-phosphate (Gal-1-P).</text>
</comment>
<comment type="catalytic activity">
    <reaction evidence="1">
        <text>alpha-D-galactose + ATP = alpha-D-galactose 1-phosphate + ADP + H(+)</text>
        <dbReference type="Rhea" id="RHEA:13553"/>
        <dbReference type="ChEBI" id="CHEBI:15378"/>
        <dbReference type="ChEBI" id="CHEBI:28061"/>
        <dbReference type="ChEBI" id="CHEBI:30616"/>
        <dbReference type="ChEBI" id="CHEBI:58336"/>
        <dbReference type="ChEBI" id="CHEBI:456216"/>
        <dbReference type="EC" id="2.7.1.6"/>
    </reaction>
</comment>
<comment type="pathway">
    <text evidence="1">Carbohydrate metabolism; galactose metabolism.</text>
</comment>
<comment type="subcellular location">
    <subcellularLocation>
        <location evidence="1">Cytoplasm</location>
    </subcellularLocation>
</comment>
<comment type="similarity">
    <text evidence="1">Belongs to the GHMP kinase family. GalK subfamily.</text>
</comment>
<feature type="chain" id="PRO_1000190062" description="Galactokinase">
    <location>
        <begin position="1"/>
        <end position="382"/>
    </location>
</feature>
<feature type="active site" description="Proton acceptor" evidence="1">
    <location>
        <position position="174"/>
    </location>
</feature>
<feature type="binding site" evidence="1">
    <location>
        <begin position="34"/>
        <end position="37"/>
    </location>
    <ligand>
        <name>substrate</name>
    </ligand>
</feature>
<feature type="binding site" evidence="1">
    <location>
        <begin position="124"/>
        <end position="130"/>
    </location>
    <ligand>
        <name>ATP</name>
        <dbReference type="ChEBI" id="CHEBI:30616"/>
    </ligand>
</feature>
<feature type="binding site" evidence="1">
    <location>
        <position position="130"/>
    </location>
    <ligand>
        <name>Mg(2+)</name>
        <dbReference type="ChEBI" id="CHEBI:18420"/>
    </ligand>
</feature>
<feature type="binding site" evidence="1">
    <location>
        <position position="162"/>
    </location>
    <ligand>
        <name>Mg(2+)</name>
        <dbReference type="ChEBI" id="CHEBI:18420"/>
    </ligand>
</feature>
<feature type="binding site" evidence="1">
    <location>
        <position position="223"/>
    </location>
    <ligand>
        <name>substrate</name>
    </ligand>
</feature>
<feature type="site" description="Transition state stabilizer" evidence="1">
    <location>
        <position position="28"/>
    </location>
</feature>
<dbReference type="EC" id="2.7.1.6" evidence="1"/>
<dbReference type="EMBL" id="CU928164">
    <property type="protein sequence ID" value="CAR16862.1"/>
    <property type="molecule type" value="Genomic_DNA"/>
</dbReference>
<dbReference type="RefSeq" id="WP_000053406.1">
    <property type="nucleotide sequence ID" value="NC_011750.1"/>
</dbReference>
<dbReference type="RefSeq" id="YP_002406751.1">
    <property type="nucleotide sequence ID" value="NC_011750.1"/>
</dbReference>
<dbReference type="SMR" id="B7NNH9"/>
<dbReference type="STRING" id="585057.ECIAI39_0725"/>
<dbReference type="KEGG" id="ect:ECIAI39_0725"/>
<dbReference type="PATRIC" id="fig|585057.6.peg.768"/>
<dbReference type="HOGENOM" id="CLU_017814_2_1_6"/>
<dbReference type="UniPathway" id="UPA00214"/>
<dbReference type="Proteomes" id="UP000000749">
    <property type="component" value="Chromosome"/>
</dbReference>
<dbReference type="GO" id="GO:0005829">
    <property type="term" value="C:cytosol"/>
    <property type="evidence" value="ECO:0007669"/>
    <property type="project" value="TreeGrafter"/>
</dbReference>
<dbReference type="GO" id="GO:0005524">
    <property type="term" value="F:ATP binding"/>
    <property type="evidence" value="ECO:0007669"/>
    <property type="project" value="UniProtKB-UniRule"/>
</dbReference>
<dbReference type="GO" id="GO:0004335">
    <property type="term" value="F:galactokinase activity"/>
    <property type="evidence" value="ECO:0007669"/>
    <property type="project" value="UniProtKB-UniRule"/>
</dbReference>
<dbReference type="GO" id="GO:0000287">
    <property type="term" value="F:magnesium ion binding"/>
    <property type="evidence" value="ECO:0007669"/>
    <property type="project" value="UniProtKB-UniRule"/>
</dbReference>
<dbReference type="GO" id="GO:0006012">
    <property type="term" value="P:galactose metabolic process"/>
    <property type="evidence" value="ECO:0007669"/>
    <property type="project" value="UniProtKB-UniRule"/>
</dbReference>
<dbReference type="FunFam" id="3.30.230.10:FF:000017">
    <property type="entry name" value="Galactokinase"/>
    <property type="match status" value="1"/>
</dbReference>
<dbReference type="FunFam" id="3.30.70.890:FF:000001">
    <property type="entry name" value="Galactokinase"/>
    <property type="match status" value="1"/>
</dbReference>
<dbReference type="Gene3D" id="3.30.230.10">
    <property type="match status" value="1"/>
</dbReference>
<dbReference type="Gene3D" id="3.30.70.890">
    <property type="entry name" value="GHMP kinase, C-terminal domain"/>
    <property type="match status" value="1"/>
</dbReference>
<dbReference type="HAMAP" id="MF_00246">
    <property type="entry name" value="Galactokinase"/>
    <property type="match status" value="1"/>
</dbReference>
<dbReference type="InterPro" id="IPR000705">
    <property type="entry name" value="Galactokinase"/>
</dbReference>
<dbReference type="InterPro" id="IPR022963">
    <property type="entry name" value="Galactokinase_bac"/>
</dbReference>
<dbReference type="InterPro" id="IPR019741">
    <property type="entry name" value="Galactokinase_CS"/>
</dbReference>
<dbReference type="InterPro" id="IPR019539">
    <property type="entry name" value="GalKase_N"/>
</dbReference>
<dbReference type="InterPro" id="IPR013750">
    <property type="entry name" value="GHMP_kinase_C_dom"/>
</dbReference>
<dbReference type="InterPro" id="IPR036554">
    <property type="entry name" value="GHMP_kinase_C_sf"/>
</dbReference>
<dbReference type="InterPro" id="IPR006204">
    <property type="entry name" value="GHMP_kinase_N_dom"/>
</dbReference>
<dbReference type="InterPro" id="IPR006203">
    <property type="entry name" value="GHMP_knse_ATP-bd_CS"/>
</dbReference>
<dbReference type="InterPro" id="IPR006206">
    <property type="entry name" value="Mevalonate/galactokinase"/>
</dbReference>
<dbReference type="InterPro" id="IPR020568">
    <property type="entry name" value="Ribosomal_Su5_D2-typ_SF"/>
</dbReference>
<dbReference type="InterPro" id="IPR014721">
    <property type="entry name" value="Ribsml_uS5_D2-typ_fold_subgr"/>
</dbReference>
<dbReference type="NCBIfam" id="TIGR00131">
    <property type="entry name" value="gal_kin"/>
    <property type="match status" value="1"/>
</dbReference>
<dbReference type="NCBIfam" id="NF003472">
    <property type="entry name" value="PRK05101.1"/>
    <property type="match status" value="1"/>
</dbReference>
<dbReference type="PANTHER" id="PTHR10457:SF7">
    <property type="entry name" value="GALACTOKINASE-RELATED"/>
    <property type="match status" value="1"/>
</dbReference>
<dbReference type="PANTHER" id="PTHR10457">
    <property type="entry name" value="MEVALONATE KINASE/GALACTOKINASE"/>
    <property type="match status" value="1"/>
</dbReference>
<dbReference type="Pfam" id="PF10509">
    <property type="entry name" value="GalKase_gal_bdg"/>
    <property type="match status" value="1"/>
</dbReference>
<dbReference type="Pfam" id="PF08544">
    <property type="entry name" value="GHMP_kinases_C"/>
    <property type="match status" value="1"/>
</dbReference>
<dbReference type="Pfam" id="PF00288">
    <property type="entry name" value="GHMP_kinases_N"/>
    <property type="match status" value="1"/>
</dbReference>
<dbReference type="PIRSF" id="PIRSF000530">
    <property type="entry name" value="Galactokinase"/>
    <property type="match status" value="1"/>
</dbReference>
<dbReference type="PRINTS" id="PR00473">
    <property type="entry name" value="GALCTOKINASE"/>
</dbReference>
<dbReference type="PRINTS" id="PR00959">
    <property type="entry name" value="MEVGALKINASE"/>
</dbReference>
<dbReference type="SUPFAM" id="SSF55060">
    <property type="entry name" value="GHMP Kinase, C-terminal domain"/>
    <property type="match status" value="1"/>
</dbReference>
<dbReference type="SUPFAM" id="SSF54211">
    <property type="entry name" value="Ribosomal protein S5 domain 2-like"/>
    <property type="match status" value="1"/>
</dbReference>
<dbReference type="PROSITE" id="PS00106">
    <property type="entry name" value="GALACTOKINASE"/>
    <property type="match status" value="1"/>
</dbReference>
<dbReference type="PROSITE" id="PS00627">
    <property type="entry name" value="GHMP_KINASES_ATP"/>
    <property type="match status" value="1"/>
</dbReference>
<proteinExistence type="inferred from homology"/>
<protein>
    <recommendedName>
        <fullName evidence="1">Galactokinase</fullName>
        <ecNumber evidence="1">2.7.1.6</ecNumber>
    </recommendedName>
    <alternativeName>
        <fullName evidence="1">Galactose kinase</fullName>
    </alternativeName>
</protein>
<organism>
    <name type="scientific">Escherichia coli O7:K1 (strain IAI39 / ExPEC)</name>
    <dbReference type="NCBI Taxonomy" id="585057"/>
    <lineage>
        <taxon>Bacteria</taxon>
        <taxon>Pseudomonadati</taxon>
        <taxon>Pseudomonadota</taxon>
        <taxon>Gammaproteobacteria</taxon>
        <taxon>Enterobacterales</taxon>
        <taxon>Enterobacteriaceae</taxon>
        <taxon>Escherichia</taxon>
    </lineage>
</organism>
<name>GAL1_ECO7I</name>